<dbReference type="EC" id="2.3.1.46" evidence="1"/>
<dbReference type="EMBL" id="FM180568">
    <property type="protein sequence ID" value="CAS11864.1"/>
    <property type="molecule type" value="Genomic_DNA"/>
</dbReference>
<dbReference type="SMR" id="B7UPG4"/>
<dbReference type="KEGG" id="ecg:E2348C_4316"/>
<dbReference type="HOGENOM" id="CLU_057851_0_1_6"/>
<dbReference type="UniPathway" id="UPA00051">
    <property type="reaction ID" value="UER00075"/>
</dbReference>
<dbReference type="Proteomes" id="UP000008205">
    <property type="component" value="Chromosome"/>
</dbReference>
<dbReference type="GO" id="GO:0005737">
    <property type="term" value="C:cytoplasm"/>
    <property type="evidence" value="ECO:0007669"/>
    <property type="project" value="UniProtKB-SubCell"/>
</dbReference>
<dbReference type="GO" id="GO:0004414">
    <property type="term" value="F:homoserine O-acetyltransferase activity"/>
    <property type="evidence" value="ECO:0007669"/>
    <property type="project" value="UniProtKB-UniRule"/>
</dbReference>
<dbReference type="GO" id="GO:0008899">
    <property type="term" value="F:homoserine O-succinyltransferase activity"/>
    <property type="evidence" value="ECO:0007669"/>
    <property type="project" value="UniProtKB-EC"/>
</dbReference>
<dbReference type="GO" id="GO:0019281">
    <property type="term" value="P:L-methionine biosynthetic process from homoserine via O-succinyl-L-homoserine and cystathionine"/>
    <property type="evidence" value="ECO:0007669"/>
    <property type="project" value="InterPro"/>
</dbReference>
<dbReference type="CDD" id="cd03131">
    <property type="entry name" value="GATase1_HTS"/>
    <property type="match status" value="1"/>
</dbReference>
<dbReference type="FunFam" id="3.40.50.880:FF:000004">
    <property type="entry name" value="Homoserine O-succinyltransferase"/>
    <property type="match status" value="1"/>
</dbReference>
<dbReference type="Gene3D" id="3.40.50.880">
    <property type="match status" value="1"/>
</dbReference>
<dbReference type="HAMAP" id="MF_00295">
    <property type="entry name" value="MetA_acyltransf"/>
    <property type="match status" value="1"/>
</dbReference>
<dbReference type="InterPro" id="IPR029062">
    <property type="entry name" value="Class_I_gatase-like"/>
</dbReference>
<dbReference type="InterPro" id="IPR005697">
    <property type="entry name" value="HST_MetA"/>
</dbReference>
<dbReference type="InterPro" id="IPR033752">
    <property type="entry name" value="MetA_family"/>
</dbReference>
<dbReference type="NCBIfam" id="TIGR01001">
    <property type="entry name" value="metA"/>
    <property type="match status" value="1"/>
</dbReference>
<dbReference type="PANTHER" id="PTHR20919">
    <property type="entry name" value="HOMOSERINE O-SUCCINYLTRANSFERASE"/>
    <property type="match status" value="1"/>
</dbReference>
<dbReference type="PANTHER" id="PTHR20919:SF0">
    <property type="entry name" value="HOMOSERINE O-SUCCINYLTRANSFERASE"/>
    <property type="match status" value="1"/>
</dbReference>
<dbReference type="Pfam" id="PF04204">
    <property type="entry name" value="HTS"/>
    <property type="match status" value="1"/>
</dbReference>
<dbReference type="PIRSF" id="PIRSF000450">
    <property type="entry name" value="H_ser_succinyltr"/>
    <property type="match status" value="1"/>
</dbReference>
<dbReference type="SUPFAM" id="SSF52317">
    <property type="entry name" value="Class I glutamine amidotransferase-like"/>
    <property type="match status" value="1"/>
</dbReference>
<sequence length="309" mass="35743">MPIRVPDELPAVNFLREENVFVMTTSRASGQEIRPLKVLILNLMPKKIETENQFLRLLSNSPLQVDIQLLRIDSRESRNTPAEHLNNFYCNFEDIQEQNFDGLIVTGAPLGLVEFNDVAYWPQIKQVLEWSKDHVTSTLFVCWAVQAALNILYGIPKQTRTDKLSGVYEHHILHPHALLTRGFDDSFLAPHSRYADFPAALIRDYTDLEILAETEEGDAYLFASKDKRIAFVTGHPEYDAQTLAQEYFRDVEAGLDPDVPYNYFPHNDPQNTPRASWRSHGNLLFTNWLNYYVYQITPYDLRHMNPTLD</sequence>
<keyword id="KW-0012">Acyltransferase</keyword>
<keyword id="KW-0028">Amino-acid biosynthesis</keyword>
<keyword id="KW-0963">Cytoplasm</keyword>
<keyword id="KW-0486">Methionine biosynthesis</keyword>
<keyword id="KW-1185">Reference proteome</keyword>
<keyword id="KW-0808">Transferase</keyword>
<accession>B7UPG4</accession>
<protein>
    <recommendedName>
        <fullName evidence="1">Homoserine O-succinyltransferase</fullName>
        <shortName evidence="1">HST</shortName>
        <ecNumber evidence="1">2.3.1.46</ecNumber>
    </recommendedName>
    <alternativeName>
        <fullName evidence="1">Homoserine transsuccinylase</fullName>
        <shortName evidence="1">HTS</shortName>
    </alternativeName>
</protein>
<proteinExistence type="inferred from homology"/>
<reference key="1">
    <citation type="journal article" date="2009" name="J. Bacteriol.">
        <title>Complete genome sequence and comparative genome analysis of enteropathogenic Escherichia coli O127:H6 strain E2348/69.</title>
        <authorList>
            <person name="Iguchi A."/>
            <person name="Thomson N.R."/>
            <person name="Ogura Y."/>
            <person name="Saunders D."/>
            <person name="Ooka T."/>
            <person name="Henderson I.R."/>
            <person name="Harris D."/>
            <person name="Asadulghani M."/>
            <person name="Kurokawa K."/>
            <person name="Dean P."/>
            <person name="Kenny B."/>
            <person name="Quail M.A."/>
            <person name="Thurston S."/>
            <person name="Dougan G."/>
            <person name="Hayashi T."/>
            <person name="Parkhill J."/>
            <person name="Frankel G."/>
        </authorList>
    </citation>
    <scope>NUCLEOTIDE SEQUENCE [LARGE SCALE GENOMIC DNA]</scope>
    <source>
        <strain>E2348/69 / EPEC</strain>
    </source>
</reference>
<organism>
    <name type="scientific">Escherichia coli O127:H6 (strain E2348/69 / EPEC)</name>
    <dbReference type="NCBI Taxonomy" id="574521"/>
    <lineage>
        <taxon>Bacteria</taxon>
        <taxon>Pseudomonadati</taxon>
        <taxon>Pseudomonadota</taxon>
        <taxon>Gammaproteobacteria</taxon>
        <taxon>Enterobacterales</taxon>
        <taxon>Enterobacteriaceae</taxon>
        <taxon>Escherichia</taxon>
    </lineage>
</organism>
<feature type="chain" id="PRO_1000191185" description="Homoserine O-succinyltransferase">
    <location>
        <begin position="1"/>
        <end position="309"/>
    </location>
</feature>
<feature type="active site" description="Acyl-thioester intermediate" evidence="1">
    <location>
        <position position="142"/>
    </location>
</feature>
<feature type="active site" description="Proton acceptor" evidence="1">
    <location>
        <position position="235"/>
    </location>
</feature>
<feature type="active site" evidence="1">
    <location>
        <position position="237"/>
    </location>
</feature>
<feature type="binding site" evidence="1">
    <location>
        <position position="163"/>
    </location>
    <ligand>
        <name>substrate</name>
    </ligand>
</feature>
<feature type="binding site" evidence="1">
    <location>
        <position position="192"/>
    </location>
    <ligand>
        <name>substrate</name>
    </ligand>
</feature>
<feature type="binding site" evidence="1">
    <location>
        <position position="249"/>
    </location>
    <ligand>
        <name>substrate</name>
    </ligand>
</feature>
<feature type="site" description="Important for acyl-CoA specificity" evidence="1">
    <location>
        <position position="111"/>
    </location>
</feature>
<feature type="site" description="Important for substrate specificity" evidence="1">
    <location>
        <position position="192"/>
    </location>
</feature>
<comment type="function">
    <text evidence="1">Transfers a succinyl group from succinyl-CoA to L-homoserine, forming succinyl-L-homoserine.</text>
</comment>
<comment type="catalytic activity">
    <reaction evidence="1">
        <text>L-homoserine + succinyl-CoA = O-succinyl-L-homoserine + CoA</text>
        <dbReference type="Rhea" id="RHEA:22008"/>
        <dbReference type="ChEBI" id="CHEBI:57287"/>
        <dbReference type="ChEBI" id="CHEBI:57292"/>
        <dbReference type="ChEBI" id="CHEBI:57476"/>
        <dbReference type="ChEBI" id="CHEBI:57661"/>
        <dbReference type="EC" id="2.3.1.46"/>
    </reaction>
</comment>
<comment type="pathway">
    <text evidence="1">Amino-acid biosynthesis; L-methionine biosynthesis via de novo pathway; O-succinyl-L-homoserine from L-homoserine: step 1/1.</text>
</comment>
<comment type="subunit">
    <text evidence="1">Homodimer.</text>
</comment>
<comment type="subcellular location">
    <subcellularLocation>
        <location evidence="1">Cytoplasm</location>
    </subcellularLocation>
</comment>
<comment type="similarity">
    <text evidence="1">Belongs to the MetA family.</text>
</comment>
<evidence type="ECO:0000255" key="1">
    <source>
        <dbReference type="HAMAP-Rule" id="MF_00295"/>
    </source>
</evidence>
<gene>
    <name evidence="1" type="primary">metAS</name>
    <name type="ordered locus">E2348C_4316</name>
</gene>
<name>METAS_ECO27</name>